<organism>
    <name type="scientific">Danio rerio</name>
    <name type="common">Zebrafish</name>
    <name type="synonym">Brachydanio rerio</name>
    <dbReference type="NCBI Taxonomy" id="7955"/>
    <lineage>
        <taxon>Eukaryota</taxon>
        <taxon>Metazoa</taxon>
        <taxon>Chordata</taxon>
        <taxon>Craniata</taxon>
        <taxon>Vertebrata</taxon>
        <taxon>Euteleostomi</taxon>
        <taxon>Actinopterygii</taxon>
        <taxon>Neopterygii</taxon>
        <taxon>Teleostei</taxon>
        <taxon>Ostariophysi</taxon>
        <taxon>Cypriniformes</taxon>
        <taxon>Danionidae</taxon>
        <taxon>Danioninae</taxon>
        <taxon>Danio</taxon>
    </lineage>
</organism>
<keyword id="KW-0040">ANK repeat</keyword>
<keyword id="KW-0963">Cytoplasm</keyword>
<keyword id="KW-1185">Reference proteome</keyword>
<keyword id="KW-0677">Repeat</keyword>
<accession>A5PMU4</accession>
<gene>
    <name type="primary">anks1b</name>
    <name type="ORF">si:ch211-211o1.2</name>
    <name type="ORF">si:dkey-11k24.3</name>
</gene>
<sequence>MGKEQELLEAARTGNVGLVEKLLSGKKGLLGSGSGSIPLPGLLSMWRGLNVNCVDGSGYTPLHHASLNGHRDVVLKLLQFEASTNVSDSKGCFPLHLAAWRGDVDIVQILIHHGPSHSRVNEQNLEKETALHCAAQYGHSEVVRVLLQELTDPSMRNSRGETPLDLAALYGRLQVVRMLLTAHPNLMSCNTRKHTPLHLAARNGHYATVQVLLEADMDVNTQTEKGSALHEAALFGKMDVVQLLLDSGIDANIRDCQGRTALDILREHPSQKSQQIASLIHDYMMSDCDRGNFHEDLARHRPIPTPRTSIPSPVPSPSLRHKNDAVTGELSKLLNEIKICRDKDCSFEELCQTISSHSQSMESFGSGRLSDEERNGTLTRINKRPTPPLPPALEEEEKSCGPSGLWEALTPCNGCRNLGFSQDKRCVEIAHSPSLDVFLPEDEDNPYESVATAVTRKPCSLDINLHNACPRNGHFSHVSVSDAERGNHGDDSTGLTPDCSPPSPDTALRNIERVIRPQPKQRTSLSSSQDVQKPLQNHSGDPSEVSSSLGYASFSTSPPASPPISPANCSTGSAEDYALTDEATYQKECIERDDRRNSHVPEQFAGLLHGSSPACESPDNPYQLYGKVRKFSVPEPPLRHGNFLRAPEYSPPFPRTGSEASALKTQREVKPQVVYRTIFHTRVNQGPVTFGEQVDKTTGVHARNGEARSNCTGGSSPANSNTGYEERACTLGRMRSMPKNVLDLQLSRNFSKSDSNLVAVSPIEEEQWGSRGQSSPGKSSPSRLERTPSFTAEWEEIDKIMSSIGAGIGTEMEGITEDHPGPRCPVQSVGQWLDNIGLVQYENHLLSNGFDNVQFMGSNVVEDQDLLEIGILNSAHRQRLLQAIRLLPRVRPIGYDGNNPTSVAEWLESLELGDYTKSFLINGYTSMELVKKIWEIELINVLKINLIGHRKRILASLGDRLHEDPPQKPPRAISLREPTGNHTPPQLSPSLSQAYPNAGSLDVQHLIMQADARRRRNDNYFEDVPRSKLERQMAQVSMQGEWCEPITLRPPNEATSSTPVQYWQHHPEKLIFQSCDYEAYYLGSMLVKELRGTESTHDACAKMRSTEQMKKIPTIVLSVSYKGVKFIDATNKNIIAEHEIRNISCAAQDPEDLSTFAYITKDLKSSHHYCHVFTAFDVNLAYEIILTLGQAFEVAYQLALQARKSGHGSSTLPESFDSKPSKPVPKPRGNIRKSMEQPSMDQKGHANVPWIVEPGQEAKRGANTKAMADAHVYYSGIQRM</sequence>
<reference key="1">
    <citation type="journal article" date="2013" name="Nature">
        <title>The zebrafish reference genome sequence and its relationship to the human genome.</title>
        <authorList>
            <person name="Howe K."/>
            <person name="Clark M.D."/>
            <person name="Torroja C.F."/>
            <person name="Torrance J."/>
            <person name="Berthelot C."/>
            <person name="Muffato M."/>
            <person name="Collins J.E."/>
            <person name="Humphray S."/>
            <person name="McLaren K."/>
            <person name="Matthews L."/>
            <person name="McLaren S."/>
            <person name="Sealy I."/>
            <person name="Caccamo M."/>
            <person name="Churcher C."/>
            <person name="Scott C."/>
            <person name="Barrett J.C."/>
            <person name="Koch R."/>
            <person name="Rauch G.J."/>
            <person name="White S."/>
            <person name="Chow W."/>
            <person name="Kilian B."/>
            <person name="Quintais L.T."/>
            <person name="Guerra-Assuncao J.A."/>
            <person name="Zhou Y."/>
            <person name="Gu Y."/>
            <person name="Yen J."/>
            <person name="Vogel J.H."/>
            <person name="Eyre T."/>
            <person name="Redmond S."/>
            <person name="Banerjee R."/>
            <person name="Chi J."/>
            <person name="Fu B."/>
            <person name="Langley E."/>
            <person name="Maguire S.F."/>
            <person name="Laird G.K."/>
            <person name="Lloyd D."/>
            <person name="Kenyon E."/>
            <person name="Donaldson S."/>
            <person name="Sehra H."/>
            <person name="Almeida-King J."/>
            <person name="Loveland J."/>
            <person name="Trevanion S."/>
            <person name="Jones M."/>
            <person name="Quail M."/>
            <person name="Willey D."/>
            <person name="Hunt A."/>
            <person name="Burton J."/>
            <person name="Sims S."/>
            <person name="McLay K."/>
            <person name="Plumb B."/>
            <person name="Davis J."/>
            <person name="Clee C."/>
            <person name="Oliver K."/>
            <person name="Clark R."/>
            <person name="Riddle C."/>
            <person name="Elliot D."/>
            <person name="Threadgold G."/>
            <person name="Harden G."/>
            <person name="Ware D."/>
            <person name="Begum S."/>
            <person name="Mortimore B."/>
            <person name="Kerry G."/>
            <person name="Heath P."/>
            <person name="Phillimore B."/>
            <person name="Tracey A."/>
            <person name="Corby N."/>
            <person name="Dunn M."/>
            <person name="Johnson C."/>
            <person name="Wood J."/>
            <person name="Clark S."/>
            <person name="Pelan S."/>
            <person name="Griffiths G."/>
            <person name="Smith M."/>
            <person name="Glithero R."/>
            <person name="Howden P."/>
            <person name="Barker N."/>
            <person name="Lloyd C."/>
            <person name="Stevens C."/>
            <person name="Harley J."/>
            <person name="Holt K."/>
            <person name="Panagiotidis G."/>
            <person name="Lovell J."/>
            <person name="Beasley H."/>
            <person name="Henderson C."/>
            <person name="Gordon D."/>
            <person name="Auger K."/>
            <person name="Wright D."/>
            <person name="Collins J."/>
            <person name="Raisen C."/>
            <person name="Dyer L."/>
            <person name="Leung K."/>
            <person name="Robertson L."/>
            <person name="Ambridge K."/>
            <person name="Leongamornlert D."/>
            <person name="McGuire S."/>
            <person name="Gilderthorp R."/>
            <person name="Griffiths C."/>
            <person name="Manthravadi D."/>
            <person name="Nichol S."/>
            <person name="Barker G."/>
            <person name="Whitehead S."/>
            <person name="Kay M."/>
            <person name="Brown J."/>
            <person name="Murnane C."/>
            <person name="Gray E."/>
            <person name="Humphries M."/>
            <person name="Sycamore N."/>
            <person name="Barker D."/>
            <person name="Saunders D."/>
            <person name="Wallis J."/>
            <person name="Babbage A."/>
            <person name="Hammond S."/>
            <person name="Mashreghi-Mohammadi M."/>
            <person name="Barr L."/>
            <person name="Martin S."/>
            <person name="Wray P."/>
            <person name="Ellington A."/>
            <person name="Matthews N."/>
            <person name="Ellwood M."/>
            <person name="Woodmansey R."/>
            <person name="Clark G."/>
            <person name="Cooper J."/>
            <person name="Tromans A."/>
            <person name="Grafham D."/>
            <person name="Skuce C."/>
            <person name="Pandian R."/>
            <person name="Andrews R."/>
            <person name="Harrison E."/>
            <person name="Kimberley A."/>
            <person name="Garnett J."/>
            <person name="Fosker N."/>
            <person name="Hall R."/>
            <person name="Garner P."/>
            <person name="Kelly D."/>
            <person name="Bird C."/>
            <person name="Palmer S."/>
            <person name="Gehring I."/>
            <person name="Berger A."/>
            <person name="Dooley C.M."/>
            <person name="Ersan-Urun Z."/>
            <person name="Eser C."/>
            <person name="Geiger H."/>
            <person name="Geisler M."/>
            <person name="Karotki L."/>
            <person name="Kirn A."/>
            <person name="Konantz J."/>
            <person name="Konantz M."/>
            <person name="Oberlander M."/>
            <person name="Rudolph-Geiger S."/>
            <person name="Teucke M."/>
            <person name="Lanz C."/>
            <person name="Raddatz G."/>
            <person name="Osoegawa K."/>
            <person name="Zhu B."/>
            <person name="Rapp A."/>
            <person name="Widaa S."/>
            <person name="Langford C."/>
            <person name="Yang F."/>
            <person name="Schuster S.C."/>
            <person name="Carter N.P."/>
            <person name="Harrow J."/>
            <person name="Ning Z."/>
            <person name="Herrero J."/>
            <person name="Searle S.M."/>
            <person name="Enright A."/>
            <person name="Geisler R."/>
            <person name="Plasterk R.H."/>
            <person name="Lee C."/>
            <person name="Westerfield M."/>
            <person name="de Jong P.J."/>
            <person name="Zon L.I."/>
            <person name="Postlethwait J.H."/>
            <person name="Nusslein-Volhard C."/>
            <person name="Hubbard T.J."/>
            <person name="Roest Crollius H."/>
            <person name="Rogers J."/>
            <person name="Stemple D.L."/>
        </authorList>
    </citation>
    <scope>NUCLEOTIDE SEQUENCE [LARGE SCALE GENOMIC DNA]</scope>
    <source>
        <strain>Tuebingen</strain>
    </source>
</reference>
<dbReference type="EMBL" id="CT025647">
    <property type="protein sequence ID" value="CAN87827.1"/>
    <property type="molecule type" value="Genomic_DNA"/>
</dbReference>
<dbReference type="EMBL" id="BX890574">
    <property type="protein sequence ID" value="CAN87827.1"/>
    <property type="status" value="JOINED"/>
    <property type="molecule type" value="Genomic_DNA"/>
</dbReference>
<dbReference type="EMBL" id="BX897712">
    <property type="protein sequence ID" value="CAN87827.1"/>
    <property type="status" value="JOINED"/>
    <property type="molecule type" value="Genomic_DNA"/>
</dbReference>
<dbReference type="EMBL" id="BX901882">
    <property type="protein sequence ID" value="CAN87827.1"/>
    <property type="status" value="JOINED"/>
    <property type="molecule type" value="Genomic_DNA"/>
</dbReference>
<dbReference type="EMBL" id="BX897712">
    <property type="protein sequence ID" value="CAN88193.1"/>
    <property type="molecule type" value="Genomic_DNA"/>
</dbReference>
<dbReference type="EMBL" id="BX890574">
    <property type="protein sequence ID" value="CAN88193.1"/>
    <property type="status" value="JOINED"/>
    <property type="molecule type" value="Genomic_DNA"/>
</dbReference>
<dbReference type="EMBL" id="BX901882">
    <property type="protein sequence ID" value="CAN88193.1"/>
    <property type="status" value="JOINED"/>
    <property type="molecule type" value="Genomic_DNA"/>
</dbReference>
<dbReference type="EMBL" id="CT025647">
    <property type="protein sequence ID" value="CAN88193.1"/>
    <property type="status" value="JOINED"/>
    <property type="molecule type" value="Genomic_DNA"/>
</dbReference>
<dbReference type="EMBL" id="BX901882">
    <property type="protein sequence ID" value="CAN88370.1"/>
    <property type="molecule type" value="Genomic_DNA"/>
</dbReference>
<dbReference type="EMBL" id="BX890574">
    <property type="protein sequence ID" value="CAN88370.1"/>
    <property type="status" value="JOINED"/>
    <property type="molecule type" value="Genomic_DNA"/>
</dbReference>
<dbReference type="EMBL" id="BX897712">
    <property type="protein sequence ID" value="CAN88370.1"/>
    <property type="status" value="JOINED"/>
    <property type="molecule type" value="Genomic_DNA"/>
</dbReference>
<dbReference type="EMBL" id="CT025647">
    <property type="protein sequence ID" value="CAN88370.1"/>
    <property type="status" value="JOINED"/>
    <property type="molecule type" value="Genomic_DNA"/>
</dbReference>
<dbReference type="EMBL" id="BX890574">
    <property type="protein sequence ID" value="CAN88710.1"/>
    <property type="molecule type" value="Genomic_DNA"/>
</dbReference>
<dbReference type="EMBL" id="BX897712">
    <property type="protein sequence ID" value="CAN88710.1"/>
    <property type="status" value="JOINED"/>
    <property type="molecule type" value="Genomic_DNA"/>
</dbReference>
<dbReference type="EMBL" id="BX901882">
    <property type="protein sequence ID" value="CAN88710.1"/>
    <property type="status" value="JOINED"/>
    <property type="molecule type" value="Genomic_DNA"/>
</dbReference>
<dbReference type="EMBL" id="CT025647">
    <property type="protein sequence ID" value="CAN88710.1"/>
    <property type="status" value="JOINED"/>
    <property type="molecule type" value="Genomic_DNA"/>
</dbReference>
<dbReference type="RefSeq" id="NP_001093487.1">
    <property type="nucleotide sequence ID" value="NM_001100017.2"/>
</dbReference>
<dbReference type="SMR" id="A5PMU4"/>
<dbReference type="FunCoup" id="A5PMU4">
    <property type="interactions" value="1275"/>
</dbReference>
<dbReference type="STRING" id="7955.ENSDARP00000117040"/>
<dbReference type="PaxDb" id="7955-ENSDARP00000025800"/>
<dbReference type="PeptideAtlas" id="A5PMU4"/>
<dbReference type="Ensembl" id="ENSDART00000133509">
    <property type="protein sequence ID" value="ENSDARP00000117040"/>
    <property type="gene ID" value="ENSDARG00000003512"/>
</dbReference>
<dbReference type="GeneID" id="565408"/>
<dbReference type="KEGG" id="dre:565408"/>
<dbReference type="AGR" id="ZFIN:ZDB-GENE-041210-349"/>
<dbReference type="CTD" id="56899"/>
<dbReference type="ZFIN" id="ZDB-GENE-041210-349">
    <property type="gene designation" value="anks1b"/>
</dbReference>
<dbReference type="eggNOG" id="KOG0507">
    <property type="taxonomic scope" value="Eukaryota"/>
</dbReference>
<dbReference type="InParanoid" id="A5PMU4"/>
<dbReference type="OrthoDB" id="10039052at2759"/>
<dbReference type="PhylomeDB" id="A5PMU4"/>
<dbReference type="PRO" id="PR:A5PMU4"/>
<dbReference type="Proteomes" id="UP000000437">
    <property type="component" value="Chromosome 4"/>
</dbReference>
<dbReference type="Bgee" id="ENSDARG00000003512">
    <property type="expression patterns" value="Expressed in cardiac ventricle and 18 other cell types or tissues"/>
</dbReference>
<dbReference type="ExpressionAtlas" id="A5PMU4">
    <property type="expression patterns" value="baseline"/>
</dbReference>
<dbReference type="GO" id="GO:0005829">
    <property type="term" value="C:cytosol"/>
    <property type="evidence" value="ECO:0000318"/>
    <property type="project" value="GO_Central"/>
</dbReference>
<dbReference type="GO" id="GO:0046875">
    <property type="term" value="F:ephrin receptor binding"/>
    <property type="evidence" value="ECO:0000318"/>
    <property type="project" value="GO_Central"/>
</dbReference>
<dbReference type="GO" id="GO:0048013">
    <property type="term" value="P:ephrin receptor signaling pathway"/>
    <property type="evidence" value="ECO:0000318"/>
    <property type="project" value="GO_Central"/>
</dbReference>
<dbReference type="CDD" id="cd01274">
    <property type="entry name" value="PTB_Anks"/>
    <property type="match status" value="1"/>
</dbReference>
<dbReference type="CDD" id="cd09499">
    <property type="entry name" value="SAM_AIDA1AB-like_repeat1"/>
    <property type="match status" value="1"/>
</dbReference>
<dbReference type="CDD" id="cd09500">
    <property type="entry name" value="SAM_AIDA1AB-like_repeat2"/>
    <property type="match status" value="1"/>
</dbReference>
<dbReference type="FunFam" id="2.30.29.30:FF:000045">
    <property type="entry name" value="Ankyrin repeat and sterile alpha motif domain-containing protein 1B"/>
    <property type="match status" value="1"/>
</dbReference>
<dbReference type="FunFam" id="1.10.150.50:FF:000015">
    <property type="entry name" value="ankyrin repeat and sterile alpha motif domain-containing protein 1B"/>
    <property type="match status" value="1"/>
</dbReference>
<dbReference type="FunFam" id="1.25.40.20:FF:000099">
    <property type="entry name" value="ankyrin repeat and sterile alpha motif domain-containing protein 1B isoform X5"/>
    <property type="match status" value="1"/>
</dbReference>
<dbReference type="Gene3D" id="1.25.40.20">
    <property type="entry name" value="Ankyrin repeat-containing domain"/>
    <property type="match status" value="2"/>
</dbReference>
<dbReference type="Gene3D" id="2.30.29.30">
    <property type="entry name" value="Pleckstrin-homology domain (PH domain)/Phosphotyrosine-binding domain (PTB)"/>
    <property type="match status" value="1"/>
</dbReference>
<dbReference type="Gene3D" id="1.10.150.50">
    <property type="entry name" value="Transcription Factor, Ets-1"/>
    <property type="match status" value="2"/>
</dbReference>
<dbReference type="InterPro" id="IPR033635">
    <property type="entry name" value="ANKS1/Caskin"/>
</dbReference>
<dbReference type="InterPro" id="IPR002110">
    <property type="entry name" value="Ankyrin_rpt"/>
</dbReference>
<dbReference type="InterPro" id="IPR036770">
    <property type="entry name" value="Ankyrin_rpt-contain_sf"/>
</dbReference>
<dbReference type="InterPro" id="IPR011993">
    <property type="entry name" value="PH-like_dom_sf"/>
</dbReference>
<dbReference type="InterPro" id="IPR006020">
    <property type="entry name" value="PTB/PI_dom"/>
</dbReference>
<dbReference type="InterPro" id="IPR001660">
    <property type="entry name" value="SAM"/>
</dbReference>
<dbReference type="InterPro" id="IPR013761">
    <property type="entry name" value="SAM/pointed_sf"/>
</dbReference>
<dbReference type="InterPro" id="IPR041880">
    <property type="entry name" value="SAM_ANKS1_repeat1"/>
</dbReference>
<dbReference type="InterPro" id="IPR041882">
    <property type="entry name" value="SAM_ANKS1_repeat2"/>
</dbReference>
<dbReference type="PANTHER" id="PTHR24174">
    <property type="entry name" value="ANKYRIN REPEAT AND STERILE ALPHA MOTIF DOMAIN-CONTAINING PROTEIN 1"/>
    <property type="match status" value="1"/>
</dbReference>
<dbReference type="PANTHER" id="PTHR24174:SF3">
    <property type="entry name" value="ANKYRIN REPEAT AND STERILE ALPHA MOTIF DOMAIN-CONTAINING PROTEIN 1B"/>
    <property type="match status" value="1"/>
</dbReference>
<dbReference type="Pfam" id="PF12796">
    <property type="entry name" value="Ank_2"/>
    <property type="match status" value="3"/>
</dbReference>
<dbReference type="Pfam" id="PF00640">
    <property type="entry name" value="PID"/>
    <property type="match status" value="1"/>
</dbReference>
<dbReference type="Pfam" id="PF00536">
    <property type="entry name" value="SAM_1"/>
    <property type="match status" value="2"/>
</dbReference>
<dbReference type="PRINTS" id="PR01415">
    <property type="entry name" value="ANKYRIN"/>
</dbReference>
<dbReference type="SMART" id="SM00248">
    <property type="entry name" value="ANK"/>
    <property type="match status" value="6"/>
</dbReference>
<dbReference type="SMART" id="SM00462">
    <property type="entry name" value="PTB"/>
    <property type="match status" value="1"/>
</dbReference>
<dbReference type="SMART" id="SM00454">
    <property type="entry name" value="SAM"/>
    <property type="match status" value="2"/>
</dbReference>
<dbReference type="SUPFAM" id="SSF48403">
    <property type="entry name" value="Ankyrin repeat"/>
    <property type="match status" value="1"/>
</dbReference>
<dbReference type="SUPFAM" id="SSF50729">
    <property type="entry name" value="PH domain-like"/>
    <property type="match status" value="1"/>
</dbReference>
<dbReference type="SUPFAM" id="SSF47769">
    <property type="entry name" value="SAM/Pointed domain"/>
    <property type="match status" value="2"/>
</dbReference>
<dbReference type="PROSITE" id="PS50297">
    <property type="entry name" value="ANK_REP_REGION"/>
    <property type="match status" value="1"/>
</dbReference>
<dbReference type="PROSITE" id="PS50088">
    <property type="entry name" value="ANK_REPEAT"/>
    <property type="match status" value="6"/>
</dbReference>
<dbReference type="PROSITE" id="PS01179">
    <property type="entry name" value="PID"/>
    <property type="match status" value="1"/>
</dbReference>
<dbReference type="PROSITE" id="PS50105">
    <property type="entry name" value="SAM_DOMAIN"/>
    <property type="match status" value="2"/>
</dbReference>
<protein>
    <recommendedName>
        <fullName>Ankyrin repeat and sterile alpha motif domain-containing protein 1B</fullName>
    </recommendedName>
</protein>
<name>ANS1B_DANRE</name>
<evidence type="ECO:0000250" key="1"/>
<evidence type="ECO:0000255" key="2">
    <source>
        <dbReference type="PROSITE-ProRule" id="PRU00148"/>
    </source>
</evidence>
<evidence type="ECO:0000255" key="3">
    <source>
        <dbReference type="PROSITE-ProRule" id="PRU00184"/>
    </source>
</evidence>
<evidence type="ECO:0000256" key="4">
    <source>
        <dbReference type="SAM" id="MobiDB-lite"/>
    </source>
</evidence>
<feature type="chain" id="PRO_0000327262" description="Ankyrin repeat and sterile alpha motif domain-containing protein 1B">
    <location>
        <begin position="1"/>
        <end position="1280"/>
    </location>
</feature>
<feature type="repeat" description="ANK 1">
    <location>
        <begin position="2"/>
        <end position="31"/>
    </location>
</feature>
<feature type="repeat" description="ANK 2">
    <location>
        <begin position="57"/>
        <end position="86"/>
    </location>
</feature>
<feature type="repeat" description="ANK 3">
    <location>
        <begin position="90"/>
        <end position="119"/>
    </location>
</feature>
<feature type="repeat" description="ANK 4">
    <location>
        <begin position="126"/>
        <end position="155"/>
    </location>
</feature>
<feature type="repeat" description="ANK 5">
    <location>
        <begin position="159"/>
        <end position="188"/>
    </location>
</feature>
<feature type="repeat" description="ANK 6">
    <location>
        <begin position="192"/>
        <end position="221"/>
    </location>
</feature>
<feature type="repeat" description="ANK 7">
    <location>
        <begin position="224"/>
        <end position="253"/>
    </location>
</feature>
<feature type="domain" description="SAM 1" evidence="3">
    <location>
        <begin position="824"/>
        <end position="890"/>
    </location>
</feature>
<feature type="domain" description="SAM 2" evidence="3">
    <location>
        <begin position="898"/>
        <end position="963"/>
    </location>
</feature>
<feature type="domain" description="PID" evidence="2">
    <location>
        <begin position="1071"/>
        <end position="1223"/>
    </location>
</feature>
<feature type="region of interest" description="Disordered" evidence="4">
    <location>
        <begin position="299"/>
        <end position="322"/>
    </location>
</feature>
<feature type="region of interest" description="Disordered" evidence="4">
    <location>
        <begin position="361"/>
        <end position="399"/>
    </location>
</feature>
<feature type="region of interest" description="Disordered" evidence="4">
    <location>
        <begin position="479"/>
        <end position="573"/>
    </location>
</feature>
<feature type="region of interest" description="Disordered" evidence="4">
    <location>
        <begin position="704"/>
        <end position="723"/>
    </location>
</feature>
<feature type="region of interest" description="Disordered" evidence="4">
    <location>
        <begin position="755"/>
        <end position="791"/>
    </location>
</feature>
<feature type="region of interest" description="Disordered" evidence="4">
    <location>
        <begin position="960"/>
        <end position="994"/>
    </location>
</feature>
<feature type="region of interest" description="Disordered" evidence="4">
    <location>
        <begin position="1208"/>
        <end position="1243"/>
    </location>
</feature>
<feature type="compositionally biased region" description="Basic and acidic residues" evidence="4">
    <location>
        <begin position="482"/>
        <end position="491"/>
    </location>
</feature>
<feature type="compositionally biased region" description="Polar residues" evidence="4">
    <location>
        <begin position="520"/>
        <end position="550"/>
    </location>
</feature>
<feature type="compositionally biased region" description="Polar residues" evidence="4">
    <location>
        <begin position="707"/>
        <end position="723"/>
    </location>
</feature>
<feature type="compositionally biased region" description="Polar residues" evidence="4">
    <location>
        <begin position="770"/>
        <end position="782"/>
    </location>
</feature>
<feature type="compositionally biased region" description="Polar residues" evidence="4">
    <location>
        <begin position="980"/>
        <end position="994"/>
    </location>
</feature>
<comment type="subcellular location">
    <subcellularLocation>
        <location evidence="1">Cytoplasm</location>
    </subcellularLocation>
</comment>
<proteinExistence type="inferred from homology"/>